<sequence length="208" mass="23324">MAKKAKYPDVPIRFSETFSDTNLYIVLLIGVPLYGVITSYLFNREYAESTLKNLLTIPVSRISLIVSKLVLLLIWIMMLTLIAWVLTLLFGLIGQFEGLSSAVLIEGFKQFMIGGALLFFLVSPIIFVTLLFKNYVPTIIFTIIISMVSIMVYGTEYSALFPWSAVWVIASGTFFPEYPPEYSFISVAATTVLGLAATIVYFKKIDIH</sequence>
<proteinExistence type="inferred from homology"/>
<evidence type="ECO:0000250" key="1"/>
<evidence type="ECO:0000255" key="2"/>
<evidence type="ECO:0000305" key="3"/>
<comment type="function">
    <text evidence="1">Part of the binding-protein-dependent transport system for bacitracin that confer resistance to this antibiotic; probably responsible for the translocation of the substrate across the membrane.</text>
</comment>
<comment type="subcellular location">
    <subcellularLocation>
        <location evidence="3">Cell membrane</location>
        <topology evidence="3">Multi-pass membrane protein</topology>
    </subcellularLocation>
</comment>
<protein>
    <recommendedName>
        <fullName>Bacitracin transport permease protein BCRB</fullName>
    </recommendedName>
</protein>
<feature type="chain" id="PRO_0000064894" description="Bacitracin transport permease protein BCRB">
    <location>
        <begin position="1"/>
        <end position="208"/>
    </location>
</feature>
<feature type="transmembrane region" description="Helical" evidence="2">
    <location>
        <begin position="23"/>
        <end position="43"/>
    </location>
</feature>
<feature type="transmembrane region" description="Helical" evidence="2">
    <location>
        <begin position="70"/>
        <end position="90"/>
    </location>
</feature>
<feature type="transmembrane region" description="Helical" evidence="2">
    <location>
        <begin position="111"/>
        <end position="131"/>
    </location>
</feature>
<feature type="transmembrane region" description="Helical" evidence="2">
    <location>
        <begin position="135"/>
        <end position="155"/>
    </location>
</feature>
<feature type="transmembrane region" description="Helical" evidence="2">
    <location>
        <begin position="159"/>
        <end position="179"/>
    </location>
</feature>
<feature type="transmembrane region" description="Helical" evidence="2">
    <location>
        <begin position="182"/>
        <end position="202"/>
    </location>
</feature>
<reference key="1">
    <citation type="journal article" date="1995" name="Mol. Microbiol.">
        <title>Bacillus licheniformis bacitracin-resistance ABC transporter: relationship to mammalian multidrug resistance.</title>
        <authorList>
            <person name="Podlesek Z."/>
            <person name="Comino A."/>
            <person name="Herzog-Velikonja B."/>
            <person name="Zgur-Bertok D."/>
            <person name="Komel R."/>
            <person name="Grabnar M."/>
        </authorList>
    </citation>
    <scope>NUCLEOTIDE SEQUENCE [GENOMIC DNA]</scope>
    <source>
        <strain>ATCC 9945A / NCIMB 11709</strain>
    </source>
</reference>
<reference key="2">
    <citation type="journal article" date="1997" name="Chem. Biol.">
        <title>The bacitracin biosynthesis operon of Bacillus licheniformis ATCC 10716: molecular characterization of three multi-modular peptide synthetases.</title>
        <authorList>
            <person name="Konz D."/>
            <person name="Klens A."/>
            <person name="Schoergendorfer K."/>
            <person name="Marahiel M.A."/>
        </authorList>
    </citation>
    <scope>NUCLEOTIDE SEQUENCE [GENOMIC DNA]</scope>
    <source>
        <strain>ATCC 10716 / DSM 603 / NBRC 12199 / NCIMB 8874 / Tracy I</strain>
    </source>
</reference>
<accession>P42333</accession>
<keyword id="KW-0046">Antibiotic resistance</keyword>
<keyword id="KW-1003">Cell membrane</keyword>
<keyword id="KW-0472">Membrane</keyword>
<keyword id="KW-0812">Transmembrane</keyword>
<keyword id="KW-1133">Transmembrane helix</keyword>
<keyword id="KW-0813">Transport</keyword>
<dbReference type="EMBL" id="L20573">
    <property type="protein sequence ID" value="AAA99505.1"/>
    <property type="molecule type" value="Unassigned_DNA"/>
</dbReference>
<dbReference type="EMBL" id="AF007865">
    <property type="protein sequence ID" value="AAD21214.1"/>
    <property type="molecule type" value="Genomic_DNA"/>
</dbReference>
<dbReference type="PIR" id="T31683">
    <property type="entry name" value="T31683"/>
</dbReference>
<dbReference type="SMR" id="P42333"/>
<dbReference type="DrugBank" id="DB00626">
    <property type="generic name" value="Bacitracin"/>
</dbReference>
<dbReference type="CARD" id="ARO:3002988">
    <property type="molecule name" value="bcrB"/>
    <property type="mechanism identifier" value="ARO:0010000"/>
    <property type="mechanism name" value="antibiotic efflux"/>
</dbReference>
<dbReference type="TCDB" id="3.A.1.131.1">
    <property type="family name" value="the atp-binding cassette (abc) superfamily"/>
</dbReference>
<dbReference type="GO" id="GO:0005886">
    <property type="term" value="C:plasma membrane"/>
    <property type="evidence" value="ECO:0007669"/>
    <property type="project" value="UniProtKB-SubCell"/>
</dbReference>
<dbReference type="GO" id="GO:0046677">
    <property type="term" value="P:response to antibiotic"/>
    <property type="evidence" value="ECO:0007669"/>
    <property type="project" value="UniProtKB-KW"/>
</dbReference>
<dbReference type="Pfam" id="PF12730">
    <property type="entry name" value="ABC2_membrane_4"/>
    <property type="match status" value="1"/>
</dbReference>
<organism>
    <name type="scientific">Bacillus licheniformis</name>
    <dbReference type="NCBI Taxonomy" id="1402"/>
    <lineage>
        <taxon>Bacteria</taxon>
        <taxon>Bacillati</taxon>
        <taxon>Bacillota</taxon>
        <taxon>Bacilli</taxon>
        <taxon>Bacillales</taxon>
        <taxon>Bacillaceae</taxon>
        <taxon>Bacillus</taxon>
    </lineage>
</organism>
<name>BCRB_BACLI</name>
<gene>
    <name type="primary">bcrB</name>
</gene>